<comment type="catalytic activity">
    <reaction evidence="3">
        <text>NAD(+) + H2O = ADP-D-ribose + nicotinamide + H(+)</text>
        <dbReference type="Rhea" id="RHEA:16301"/>
        <dbReference type="ChEBI" id="CHEBI:15377"/>
        <dbReference type="ChEBI" id="CHEBI:15378"/>
        <dbReference type="ChEBI" id="CHEBI:17154"/>
        <dbReference type="ChEBI" id="CHEBI:57540"/>
        <dbReference type="ChEBI" id="CHEBI:57967"/>
        <dbReference type="EC" id="3.2.2.6"/>
    </reaction>
    <physiologicalReaction direction="left-to-right" evidence="3">
        <dbReference type="Rhea" id="RHEA:16302"/>
    </physiologicalReaction>
</comment>
<comment type="subunit">
    <text evidence="1">Interacts with EDS1.</text>
</comment>
<comment type="subcellular location">
    <subcellularLocation>
        <location evidence="4">Nucleus</location>
    </subcellularLocation>
</comment>
<comment type="domain">
    <text evidence="3">The TIR domain mediates NAD(+) hydrolase (NADase) activity. Self-association of TIR domains is required for NADase activity.</text>
</comment>
<comment type="miscellaneous">
    <text evidence="6">Only two amino-acid changes (D195N and H950Y) are linked to a change from a susceptible strain (cv. RLD) to a resistant one (cv. Columbia or cv. Landsberg erecta).</text>
</comment>
<organism evidence="8">
    <name type="scientific">Arabidopsis thaliana</name>
    <name type="common">Mouse-ear cress</name>
    <dbReference type="NCBI Taxonomy" id="3702"/>
    <lineage>
        <taxon>Eukaryota</taxon>
        <taxon>Viridiplantae</taxon>
        <taxon>Streptophyta</taxon>
        <taxon>Embryophyta</taxon>
        <taxon>Tracheophyta</taxon>
        <taxon>Spermatophyta</taxon>
        <taxon>Magnoliopsida</taxon>
        <taxon>eudicotyledons</taxon>
        <taxon>Gunneridae</taxon>
        <taxon>Pentapetalae</taxon>
        <taxon>rosids</taxon>
        <taxon>malvids</taxon>
        <taxon>Brassicales</taxon>
        <taxon>Brassicaceae</taxon>
        <taxon>Camelineae</taxon>
        <taxon>Arabidopsis</taxon>
    </lineage>
</organism>
<gene>
    <name type="primary">RPS4</name>
</gene>
<evidence type="ECO:0000250" key="1">
    <source>
        <dbReference type="UniProtKB" id="Q9XGM3"/>
    </source>
</evidence>
<evidence type="ECO:0000255" key="2"/>
<evidence type="ECO:0000255" key="3">
    <source>
        <dbReference type="PROSITE-ProRule" id="PRU00204"/>
    </source>
</evidence>
<evidence type="ECO:0000255" key="4">
    <source>
        <dbReference type="PROSITE-ProRule" id="PRU00768"/>
    </source>
</evidence>
<evidence type="ECO:0000256" key="5">
    <source>
        <dbReference type="SAM" id="MobiDB-lite"/>
    </source>
</evidence>
<evidence type="ECO:0000269" key="6">
    <source>
    </source>
</evidence>
<evidence type="ECO:0000303" key="7">
    <source>
    </source>
</evidence>
<evidence type="ECO:0000312" key="8">
    <source>
        <dbReference type="EMBL" id="CAB53784.1"/>
    </source>
</evidence>
<keyword id="KW-0378">Hydrolase</keyword>
<keyword id="KW-0433">Leucine-rich repeat</keyword>
<keyword id="KW-0520">NAD</keyword>
<keyword id="KW-0539">Nucleus</keyword>
<keyword id="KW-0677">Repeat</keyword>
<proteinExistence type="inferred from homology"/>
<protein>
    <recommendedName>
        <fullName evidence="7">Inactive disease resistance protein RPS4</fullName>
        <ecNumber evidence="3">3.2.2.6</ecNumber>
    </recommendedName>
    <alternativeName>
        <fullName evidence="7">Resistance to Pseudomonas syringae 4</fullName>
    </alternativeName>
</protein>
<reference evidence="8" key="1">
    <citation type="journal article" date="1999" name="Plant J.">
        <title>The Arabidopsis RPS4 bacterial-resistance gene is a member of the TIR-NBS-LRR family of disease-resistance genes.</title>
        <authorList>
            <person name="Gassmann W."/>
            <person name="Hinsch M.E."/>
            <person name="Staskawicz B.J."/>
        </authorList>
    </citation>
    <scope>NUCLEOTIDE SEQUENCE [GENOMIC DNA]</scope>
    <source>
        <strain>cv. RLD</strain>
    </source>
</reference>
<sequence>METSSISTVEDKPPQHQVFINFRGADLRRRFVSHLVTALKLNNINVFIDDYEDRGQPLDVLLKRIEESKIVLAIFSGNYTESVWCVRELEKIKDCTDEGTLVAIPIFYKLEPSTVRDLKGKFGDRFRSMAKGDERKKKWKEAFNLIPNIMGIIIDKKSVESEKVNEIVKAVKTALTGIPPEGSHNAVVGALGNSDAGTSSGDKKHETFGNEQRLKDLEEKLDRDKYKGTRIIGVVGMPGIGKTTLLKELYKTWQGKFSRHALIDQIRVKSKHLELDRLPQMLLGELSKLNNPHVDNLKDPYSQLHERKVLVVLDDVSKREQIDALREILDWIKEGKEGSRVVIATSDMSLTNGLVDDTYMVQNLNHRDSLQLFHYHAFIDDQANPQKKDFMKLSEGFVHYARGHPLALKVLGGELNKKSMDHWNSKMKKLAQSPSPNIVSVFQVSYDELTTAQKDAFLDIACFRSQDKDYVESLLASSDLGSAEAMSAVKSLTDKFLINTCDGRVEMHDLLYKFSREVDLKASNQDGSRQRRLWLHQHIIKGGIINVLQNKMKAANVRGIFLDLSEVEDETSLDRDHFINMGNLRYLKFYNSHCPQECKTNNKINIPDKLKLPLKEVRCLHWLKFPLETLPNDFNPINLVDLKLPYSEMEQLWEGDKDTPCLRWVDLNHSSKLCSLSGLSKAEKLQRLNLEGCTTLKAFPHDMKKMKMLAFLNLKGCTSLESLPEMNLISLKTLTLSGCSTFKEFPLISDNIETLYLDGTAISQLPMNMEKLQRLVVLNMKDCKMLEEIPGRVGELKALQELILSDCLNLKIFPEIDISFLNILLLDGTAIEVMPQLPSVQYLCLSRNAKISCLPVGISQLSQLKWLDLKYCTSLTSVPEFPPNLQCLDAHGCSSLKTVSKPLARIMPTEQNHSTFIFTNCENLEQAAKEEITSYAQRKCQLLSYARKRHNGGLVSESLFSTCFPGCEVPSWFCHETVGSELEVKLLPHWHDKKLAGIALCAVVSCLDPQDQVSRLSVTCTFKVKDEDKSWVPYTCPVGSWTRHGGGKDKIELDHVFIGYTSCPHTIKCHEEGNSDECNPTEASLKFTVTGGTSENGKYKVLKCGLSLVYAKDKDKNSALETKYDMLIGKSFQETSEGVDGRVKKTKGKYVMPVEKNFQETTEGVDGRVKKKKKTRMDNGRPKKKQRSGRDDNQTRMQVELQEGNINSVIMHTVKNF</sequence>
<dbReference type="EC" id="3.2.2.6" evidence="3"/>
<dbReference type="EMBL" id="AJ249263">
    <property type="protein sequence ID" value="CAB53784.1"/>
    <property type="molecule type" value="Genomic_DNA"/>
</dbReference>
<dbReference type="PIR" id="T51141">
    <property type="entry name" value="T51141"/>
</dbReference>
<dbReference type="SMR" id="Q9SCX7"/>
<dbReference type="ExpressionAtlas" id="Q9SCX7">
    <property type="expression patterns" value="baseline and differential"/>
</dbReference>
<dbReference type="GO" id="GO:0005634">
    <property type="term" value="C:nucleus"/>
    <property type="evidence" value="ECO:0007669"/>
    <property type="project" value="UniProtKB-SubCell"/>
</dbReference>
<dbReference type="GO" id="GO:0043531">
    <property type="term" value="F:ADP binding"/>
    <property type="evidence" value="ECO:0007669"/>
    <property type="project" value="InterPro"/>
</dbReference>
<dbReference type="GO" id="GO:0061809">
    <property type="term" value="F:NAD+ nucleosidase activity, cyclic ADP-ribose generating"/>
    <property type="evidence" value="ECO:0007669"/>
    <property type="project" value="UniProtKB-EC"/>
</dbReference>
<dbReference type="GO" id="GO:0006952">
    <property type="term" value="P:defense response"/>
    <property type="evidence" value="ECO:0007669"/>
    <property type="project" value="InterPro"/>
</dbReference>
<dbReference type="GO" id="GO:0007165">
    <property type="term" value="P:signal transduction"/>
    <property type="evidence" value="ECO:0007669"/>
    <property type="project" value="InterPro"/>
</dbReference>
<dbReference type="CDD" id="cd00267">
    <property type="entry name" value="ABC_ATPase"/>
    <property type="match status" value="1"/>
</dbReference>
<dbReference type="FunFam" id="1.10.8.430:FF:000002">
    <property type="entry name" value="Disease resistance protein (TIR-NBS-LRR class)"/>
    <property type="match status" value="1"/>
</dbReference>
<dbReference type="FunFam" id="3.40.50.10140:FF:000007">
    <property type="entry name" value="Disease resistance protein (TIR-NBS-LRR class)"/>
    <property type="match status" value="1"/>
</dbReference>
<dbReference type="FunFam" id="3.40.50.300:FF:001862">
    <property type="entry name" value="Disease resistance protein RPS4"/>
    <property type="match status" value="1"/>
</dbReference>
<dbReference type="FunFam" id="3.80.10.10:FF:000386">
    <property type="entry name" value="Disease resistance protein RPS4"/>
    <property type="match status" value="1"/>
</dbReference>
<dbReference type="FunFam" id="3.80.10.10:FF:000568">
    <property type="entry name" value="Disease resistance protein RPS4"/>
    <property type="match status" value="1"/>
</dbReference>
<dbReference type="Gene3D" id="1.10.8.430">
    <property type="entry name" value="Helical domain of apoptotic protease-activating factors"/>
    <property type="match status" value="1"/>
</dbReference>
<dbReference type="Gene3D" id="3.40.50.300">
    <property type="entry name" value="P-loop containing nucleotide triphosphate hydrolases"/>
    <property type="match status" value="1"/>
</dbReference>
<dbReference type="Gene3D" id="3.80.10.10">
    <property type="entry name" value="Ribonuclease Inhibitor"/>
    <property type="match status" value="2"/>
</dbReference>
<dbReference type="Gene3D" id="3.40.50.10140">
    <property type="entry name" value="Toll/interleukin-1 receptor homology (TIR) domain"/>
    <property type="match status" value="1"/>
</dbReference>
<dbReference type="InterPro" id="IPR042197">
    <property type="entry name" value="Apaf_helical"/>
</dbReference>
<dbReference type="InterPro" id="IPR045344">
    <property type="entry name" value="C-JID"/>
</dbReference>
<dbReference type="InterPro" id="IPR044974">
    <property type="entry name" value="Disease_R_plants"/>
</dbReference>
<dbReference type="InterPro" id="IPR011713">
    <property type="entry name" value="Leu-rich_rpt_3"/>
</dbReference>
<dbReference type="InterPro" id="IPR032675">
    <property type="entry name" value="LRR_dom_sf"/>
</dbReference>
<dbReference type="InterPro" id="IPR002182">
    <property type="entry name" value="NB-ARC"/>
</dbReference>
<dbReference type="InterPro" id="IPR027417">
    <property type="entry name" value="P-loop_NTPase"/>
</dbReference>
<dbReference type="InterPro" id="IPR000157">
    <property type="entry name" value="TIR_dom"/>
</dbReference>
<dbReference type="InterPro" id="IPR035897">
    <property type="entry name" value="Toll_tir_struct_dom_sf"/>
</dbReference>
<dbReference type="PANTHER" id="PTHR11017:SF277">
    <property type="entry name" value="DISEASE RESISTANCE PROTEIN RPS4-RELATED"/>
    <property type="match status" value="1"/>
</dbReference>
<dbReference type="PANTHER" id="PTHR11017">
    <property type="entry name" value="LEUCINE-RICH REPEAT-CONTAINING PROTEIN"/>
    <property type="match status" value="1"/>
</dbReference>
<dbReference type="Pfam" id="PF20160">
    <property type="entry name" value="C-JID"/>
    <property type="match status" value="1"/>
</dbReference>
<dbReference type="Pfam" id="PF07725">
    <property type="entry name" value="LRR_3"/>
    <property type="match status" value="1"/>
</dbReference>
<dbReference type="Pfam" id="PF00931">
    <property type="entry name" value="NB-ARC"/>
    <property type="match status" value="1"/>
</dbReference>
<dbReference type="Pfam" id="PF01582">
    <property type="entry name" value="TIR"/>
    <property type="match status" value="1"/>
</dbReference>
<dbReference type="Pfam" id="PF23282">
    <property type="entry name" value="WHD_ROQ1"/>
    <property type="match status" value="1"/>
</dbReference>
<dbReference type="PRINTS" id="PR00364">
    <property type="entry name" value="DISEASERSIST"/>
</dbReference>
<dbReference type="SMART" id="SM00255">
    <property type="entry name" value="TIR"/>
    <property type="match status" value="1"/>
</dbReference>
<dbReference type="SUPFAM" id="SSF52058">
    <property type="entry name" value="L domain-like"/>
    <property type="match status" value="1"/>
</dbReference>
<dbReference type="SUPFAM" id="SSF52540">
    <property type="entry name" value="P-loop containing nucleoside triphosphate hydrolases"/>
    <property type="match status" value="1"/>
</dbReference>
<dbReference type="SUPFAM" id="SSF52200">
    <property type="entry name" value="Toll/Interleukin receptor TIR domain"/>
    <property type="match status" value="1"/>
</dbReference>
<dbReference type="PROSITE" id="PS50104">
    <property type="entry name" value="TIR"/>
    <property type="match status" value="1"/>
</dbReference>
<accession>Q9SCX7</accession>
<feature type="chain" id="PRO_0000431385" description="Inactive disease resistance protein RPS4">
    <location>
        <begin position="1"/>
        <end position="1217"/>
    </location>
</feature>
<feature type="domain" description="TIR" evidence="3">
    <location>
        <begin position="14"/>
        <end position="175"/>
    </location>
</feature>
<feature type="domain" description="NB-ARC" evidence="2">
    <location>
        <begin position="211"/>
        <end position="472"/>
    </location>
</feature>
<feature type="repeat" description="LRR 1" evidence="2">
    <location>
        <begin position="260"/>
        <end position="285"/>
    </location>
</feature>
<feature type="repeat" description="LRR 2" evidence="2">
    <location>
        <begin position="436"/>
        <end position="459"/>
    </location>
</feature>
<feature type="repeat" description="LRR 3" evidence="2">
    <location>
        <begin position="614"/>
        <end position="636"/>
    </location>
</feature>
<feature type="repeat" description="LRR 4" evidence="2">
    <location>
        <begin position="637"/>
        <end position="659"/>
    </location>
</feature>
<feature type="repeat" description="LRR 5" evidence="2">
    <location>
        <begin position="682"/>
        <end position="706"/>
    </location>
</feature>
<feature type="repeat" description="LRR 6" evidence="2">
    <location>
        <begin position="708"/>
        <end position="728"/>
    </location>
</feature>
<feature type="repeat" description="LRR 7" evidence="2">
    <location>
        <begin position="729"/>
        <end position="749"/>
    </location>
</feature>
<feature type="repeat" description="LRR 8" evidence="2">
    <location>
        <begin position="750"/>
        <end position="774"/>
    </location>
</feature>
<feature type="repeat" description="LRR 9" evidence="2">
    <location>
        <begin position="796"/>
        <end position="818"/>
    </location>
</feature>
<feature type="repeat" description="LRR 10" evidence="2">
    <location>
        <begin position="819"/>
        <end position="842"/>
    </location>
</feature>
<feature type="repeat" description="LRR 11" evidence="2">
    <location>
        <begin position="861"/>
        <end position="887"/>
    </location>
</feature>
<feature type="region of interest" description="Disordered" evidence="5">
    <location>
        <begin position="1162"/>
        <end position="1195"/>
    </location>
</feature>
<feature type="short sequence motif" description="Nuclear localization signal" evidence="4">
    <location>
        <begin position="1170"/>
        <end position="1177"/>
    </location>
</feature>
<feature type="active site" evidence="3">
    <location>
        <position position="88"/>
    </location>
</feature>
<name>RPS4R_ARATH</name>